<name>CTAA_BACLD</name>
<keyword id="KW-1003">Cell membrane</keyword>
<keyword id="KW-1015">Disulfide bond</keyword>
<keyword id="KW-0350">Heme biosynthesis</keyword>
<keyword id="KW-0408">Iron</keyword>
<keyword id="KW-0472">Membrane</keyword>
<keyword id="KW-0479">Metal-binding</keyword>
<keyword id="KW-0560">Oxidoreductase</keyword>
<keyword id="KW-1185">Reference proteome</keyword>
<keyword id="KW-0812">Transmembrane</keyword>
<keyword id="KW-1133">Transmembrane helix</keyword>
<gene>
    <name evidence="1" type="primary">ctaA</name>
    <name type="ordered locus">BLi01704</name>
    <name type="ordered locus">BL02999</name>
</gene>
<dbReference type="EC" id="1.17.99.9" evidence="1"/>
<dbReference type="EMBL" id="CP000002">
    <property type="protein sequence ID" value="AAU23243.1"/>
    <property type="molecule type" value="Genomic_DNA"/>
</dbReference>
<dbReference type="EMBL" id="AE017333">
    <property type="protein sequence ID" value="AAU40600.1"/>
    <property type="molecule type" value="Genomic_DNA"/>
</dbReference>
<dbReference type="RefSeq" id="WP_003181473.1">
    <property type="nucleotide sequence ID" value="NC_006322.1"/>
</dbReference>
<dbReference type="SMR" id="Q65K14"/>
<dbReference type="STRING" id="279010.BL02999"/>
<dbReference type="DNASU" id="3030841"/>
<dbReference type="KEGG" id="bld:BLi01704"/>
<dbReference type="KEGG" id="bli:BL02999"/>
<dbReference type="eggNOG" id="COG1612">
    <property type="taxonomic scope" value="Bacteria"/>
</dbReference>
<dbReference type="HOGENOM" id="CLU_041525_3_1_9"/>
<dbReference type="UniPathway" id="UPA00269">
    <property type="reaction ID" value="UER00713"/>
</dbReference>
<dbReference type="Proteomes" id="UP000000606">
    <property type="component" value="Chromosome"/>
</dbReference>
<dbReference type="GO" id="GO:0005886">
    <property type="term" value="C:plasma membrane"/>
    <property type="evidence" value="ECO:0007669"/>
    <property type="project" value="UniProtKB-SubCell"/>
</dbReference>
<dbReference type="GO" id="GO:0046872">
    <property type="term" value="F:metal ion binding"/>
    <property type="evidence" value="ECO:0007669"/>
    <property type="project" value="UniProtKB-KW"/>
</dbReference>
<dbReference type="GO" id="GO:0016653">
    <property type="term" value="F:oxidoreductase activity, acting on NAD(P)H, heme protein as acceptor"/>
    <property type="evidence" value="ECO:0007669"/>
    <property type="project" value="InterPro"/>
</dbReference>
<dbReference type="GO" id="GO:0006784">
    <property type="term" value="P:heme A biosynthetic process"/>
    <property type="evidence" value="ECO:0007669"/>
    <property type="project" value="UniProtKB-UniRule"/>
</dbReference>
<dbReference type="HAMAP" id="MF_01664">
    <property type="entry name" value="HemeA_synth_type1"/>
    <property type="match status" value="1"/>
</dbReference>
<dbReference type="InterPro" id="IPR003780">
    <property type="entry name" value="COX15/CtaA_fam"/>
</dbReference>
<dbReference type="InterPro" id="IPR050450">
    <property type="entry name" value="COX15/CtaA_HemeA_synthase"/>
</dbReference>
<dbReference type="InterPro" id="IPR023755">
    <property type="entry name" value="HemeA_Synthase_type1"/>
</dbReference>
<dbReference type="PANTHER" id="PTHR35457">
    <property type="entry name" value="HEME A SYNTHASE"/>
    <property type="match status" value="1"/>
</dbReference>
<dbReference type="PANTHER" id="PTHR35457:SF1">
    <property type="entry name" value="HEME A SYNTHASE"/>
    <property type="match status" value="1"/>
</dbReference>
<dbReference type="Pfam" id="PF02628">
    <property type="entry name" value="COX15-CtaA"/>
    <property type="match status" value="1"/>
</dbReference>
<feature type="chain" id="PRO_0000348973" description="Heme A synthase">
    <location>
        <begin position="1"/>
        <end position="302"/>
    </location>
</feature>
<feature type="topological domain" description="Cytoplasmic" evidence="1">
    <location>
        <begin position="1"/>
        <end position="6"/>
    </location>
</feature>
<feature type="transmembrane region" description="Helical" evidence="1">
    <location>
        <begin position="7"/>
        <end position="27"/>
    </location>
</feature>
<feature type="topological domain" description="Extracellular" evidence="1">
    <location>
        <begin position="28"/>
        <end position="61"/>
    </location>
</feature>
<feature type="transmembrane region" description="Helical" evidence="1">
    <location>
        <begin position="62"/>
        <end position="82"/>
    </location>
</feature>
<feature type="topological domain" description="Cytoplasmic" evidence="1">
    <location>
        <begin position="83"/>
        <end position="91"/>
    </location>
</feature>
<feature type="transmembrane region" description="Helical" evidence="1">
    <location>
        <begin position="92"/>
        <end position="112"/>
    </location>
</feature>
<feature type="topological domain" description="Extracellular" evidence="1">
    <location>
        <begin position="113"/>
        <end position="120"/>
    </location>
</feature>
<feature type="transmembrane region" description="Helical" evidence="1">
    <location>
        <begin position="121"/>
        <end position="141"/>
    </location>
</feature>
<feature type="topological domain" description="Cytoplasmic" evidence="1">
    <location>
        <begin position="142"/>
        <end position="158"/>
    </location>
</feature>
<feature type="transmembrane region" description="Helical" evidence="1">
    <location>
        <begin position="159"/>
        <end position="179"/>
    </location>
</feature>
<feature type="topological domain" description="Extracellular" evidence="1">
    <location>
        <begin position="180"/>
        <end position="208"/>
    </location>
</feature>
<feature type="transmembrane region" description="Helical" evidence="1">
    <location>
        <begin position="209"/>
        <end position="229"/>
    </location>
</feature>
<feature type="topological domain" description="Cytoplasmic" evidence="1">
    <location>
        <begin position="230"/>
        <end position="242"/>
    </location>
</feature>
<feature type="transmembrane region" description="Helical" evidence="1">
    <location>
        <begin position="243"/>
        <end position="263"/>
    </location>
</feature>
<feature type="topological domain" description="Extracellular" evidence="1">
    <location>
        <begin position="264"/>
        <end position="272"/>
    </location>
</feature>
<feature type="transmembrane region" description="Helical" evidence="1">
    <location>
        <begin position="273"/>
        <end position="293"/>
    </location>
</feature>
<feature type="topological domain" description="Cytoplasmic" evidence="1">
    <location>
        <begin position="294"/>
        <end position="302"/>
    </location>
</feature>
<feature type="active site" evidence="1">
    <location>
        <position position="57"/>
    </location>
</feature>
<feature type="binding site" description="axial binding residue" evidence="1">
    <location>
        <position position="60"/>
    </location>
    <ligand>
        <name>heme o</name>
        <dbReference type="ChEBI" id="CHEBI:24480"/>
    </ligand>
    <ligandPart>
        <name>Fe</name>
        <dbReference type="ChEBI" id="CHEBI:18248"/>
    </ligandPart>
</feature>
<feature type="binding site" description="axial binding residue" evidence="1">
    <location>
        <position position="122"/>
    </location>
    <ligand>
        <name>heme o</name>
        <dbReference type="ChEBI" id="CHEBI:24480"/>
    </ligand>
    <ligandPart>
        <name>Fe</name>
        <dbReference type="ChEBI" id="CHEBI:18248"/>
    </ligandPart>
</feature>
<feature type="binding site" description="axial binding residue" evidence="1">
    <location>
        <position position="213"/>
    </location>
    <ligand>
        <name>heme b</name>
        <dbReference type="ChEBI" id="CHEBI:60344"/>
    </ligand>
    <ligandPart>
        <name>Fe</name>
        <dbReference type="ChEBI" id="CHEBI:18248"/>
    </ligandPart>
</feature>
<feature type="binding site" description="axial binding residue" evidence="1">
    <location>
        <position position="275"/>
    </location>
    <ligand>
        <name>heme b</name>
        <dbReference type="ChEBI" id="CHEBI:60344"/>
    </ligand>
    <ligandPart>
        <name>Fe</name>
        <dbReference type="ChEBI" id="CHEBI:18248"/>
    </ligandPart>
</feature>
<feature type="disulfide bond" description="Essential for catalytic activity" evidence="1">
    <location>
        <begin position="35"/>
        <end position="42"/>
    </location>
</feature>
<feature type="disulfide bond" evidence="1">
    <location>
        <begin position="188"/>
        <end position="194"/>
    </location>
</feature>
<proteinExistence type="inferred from homology"/>
<comment type="function">
    <text evidence="1">Catalyzes the conversion of heme O to heme A by two successive hydroxylations of the methyl group at C8. The first hydroxylation forms heme I, the second hydroxylation results in an unstable dihydroxymethyl group, which spontaneously dehydrates, resulting in the formyl group of heme A.</text>
</comment>
<comment type="catalytic activity">
    <reaction evidence="1">
        <text>Fe(II)-heme o + 2 A + H2O = Fe(II)-heme a + 2 AH2</text>
        <dbReference type="Rhea" id="RHEA:63388"/>
        <dbReference type="ChEBI" id="CHEBI:13193"/>
        <dbReference type="ChEBI" id="CHEBI:15377"/>
        <dbReference type="ChEBI" id="CHEBI:17499"/>
        <dbReference type="ChEBI" id="CHEBI:60530"/>
        <dbReference type="ChEBI" id="CHEBI:61715"/>
        <dbReference type="EC" id="1.17.99.9"/>
    </reaction>
    <physiologicalReaction direction="left-to-right" evidence="1">
        <dbReference type="Rhea" id="RHEA:63389"/>
    </physiologicalReaction>
</comment>
<comment type="cofactor">
    <cofactor evidence="1">
        <name>heme b</name>
        <dbReference type="ChEBI" id="CHEBI:60344"/>
    </cofactor>
</comment>
<comment type="pathway">
    <text evidence="1">Porphyrin-containing compound metabolism; heme A biosynthesis; heme A from heme O: step 1/1.</text>
</comment>
<comment type="subunit">
    <text evidence="1">Interacts with CtaB.</text>
</comment>
<comment type="subcellular location">
    <subcellularLocation>
        <location evidence="1">Cell membrane</location>
        <topology evidence="1">Multi-pass membrane protein</topology>
    </subcellularLocation>
</comment>
<comment type="domain">
    <text evidence="1">The N-half (TM1-TM4) and C-half (TM5-TM8) domains are connected by an intracellular loop. Each domain is formed from four-helix bundles and they align in a pseudo twofold symmetry manner. The N-half domain is the substrate-heme O binding domain and the C-half domain is the cofactor heme B binding domain.</text>
</comment>
<comment type="domain">
    <text evidence="1">The cysteines of disulfide bond Cys-35 and Cys-42 may be involved in transfer of reducing equivalents from quinol in the membrane to the active site of the enzyme.</text>
</comment>
<comment type="similarity">
    <text evidence="1">Belongs to the COX15/CtaA family. Type 1 subfamily.</text>
</comment>
<protein>
    <recommendedName>
        <fullName evidence="1">Heme A synthase</fullName>
        <shortName evidence="1">HAS</shortName>
        <ecNumber evidence="1">1.17.99.9</ecNumber>
    </recommendedName>
    <alternativeName>
        <fullName evidence="1">Cytochrome aa3-controlling protein</fullName>
    </alternativeName>
</protein>
<organism>
    <name type="scientific">Bacillus licheniformis (strain ATCC 14580 / DSM 13 / JCM 2505 / CCUG 7422 / NBRC 12200 / NCIMB 9375 / NCTC 10341 / NRRL NRS-1264 / Gibson 46)</name>
    <dbReference type="NCBI Taxonomy" id="279010"/>
    <lineage>
        <taxon>Bacteria</taxon>
        <taxon>Bacillati</taxon>
        <taxon>Bacillota</taxon>
        <taxon>Bacilli</taxon>
        <taxon>Bacillales</taxon>
        <taxon>Bacillaceae</taxon>
        <taxon>Bacillus</taxon>
    </lineage>
</organism>
<accession>Q65K14</accession>
<accession>Q62VG5</accession>
<reference key="1">
    <citation type="journal article" date="2004" name="J. Mol. Microbiol. Biotechnol.">
        <title>The complete genome sequence of Bacillus licheniformis DSM13, an organism with great industrial potential.</title>
        <authorList>
            <person name="Veith B."/>
            <person name="Herzberg C."/>
            <person name="Steckel S."/>
            <person name="Feesche J."/>
            <person name="Maurer K.H."/>
            <person name="Ehrenreich P."/>
            <person name="Baeumer S."/>
            <person name="Henne A."/>
            <person name="Liesegang H."/>
            <person name="Merkl R."/>
            <person name="Ehrenreich A."/>
            <person name="Gottschalk G."/>
        </authorList>
    </citation>
    <scope>NUCLEOTIDE SEQUENCE [LARGE SCALE GENOMIC DNA]</scope>
    <source>
        <strain>ATCC 14580 / DSM 13 / JCM 2505 / CCUG 7422 / NBRC 12200 / NCIMB 9375 / NCTC 10341 / NRRL NRS-1264 / Gibson 46</strain>
    </source>
</reference>
<reference key="2">
    <citation type="journal article" date="2004" name="Genome Biol.">
        <title>Complete genome sequence of the industrial bacterium Bacillus licheniformis and comparisons with closely related Bacillus species.</title>
        <authorList>
            <person name="Rey M.W."/>
            <person name="Ramaiya P."/>
            <person name="Nelson B.A."/>
            <person name="Brody-Karpin S.D."/>
            <person name="Zaretsky E.J."/>
            <person name="Tang M."/>
            <person name="Lopez de Leon A."/>
            <person name="Xiang H."/>
            <person name="Gusti V."/>
            <person name="Clausen I.G."/>
            <person name="Olsen P.B."/>
            <person name="Rasmussen M.D."/>
            <person name="Andersen J.T."/>
            <person name="Joergensen P.L."/>
            <person name="Larsen T.S."/>
            <person name="Sorokin A."/>
            <person name="Bolotin A."/>
            <person name="Lapidus A."/>
            <person name="Galleron N."/>
            <person name="Ehrlich S.D."/>
            <person name="Berka R.M."/>
        </authorList>
    </citation>
    <scope>NUCLEOTIDE SEQUENCE [LARGE SCALE GENOMIC DNA]</scope>
    <source>
        <strain>ATCC 14580 / DSM 13 / JCM 2505 / CCUG 7422 / NBRC 12200 / NCIMB 9375 / NCTC 10341 / NRRL NRS-1264 / Gibson 46</strain>
    </source>
</reference>
<sequence length="302" mass="33298">MNKALKGLGIITTIAMLFVLIGGALVTKTGSGMGCGRSWPLCNGSIFPALTLESIIEWSHRFVSGTSGVLVLALAIWTWKKIGHIRETKFLAVMSVVFLILQALLGAAAVVFGSSALIMALHFGISLISFASVLLLTLLVFEADSKQKSESFYIGKTMQFHMIGIIIYTYVVVYTGAYVRHTSSSLACLDFPMCSTENGWLPGKFHEWVQMGHRAAALLLFAWIIAAAVHAARQYKNQKRIYWGWMISLILIILQAASGIAVVYSRLDLGFALAHAFFISCLFGILCYFLLLVARYRRQVQK</sequence>
<evidence type="ECO:0000255" key="1">
    <source>
        <dbReference type="HAMAP-Rule" id="MF_01664"/>
    </source>
</evidence>